<proteinExistence type="inferred from homology"/>
<sequence length="185" mass="20794">MINEIKKDTQDRMEKSLEALKGHIAKIRTGRAQPSLLDAIQVDYYGSATPLRQLANVVAEDARTLAVTVFDRSLIQAVEKAILTSDLGLNPSSAGTTIRVPLPPLTEERRRDLIKIVKGEGEQGKVAIRNVRRDANDKIKALLKDKEISENDQRKAEEEIQKITDSYIKKVDEVLAEKEKELMDF</sequence>
<keyword id="KW-0963">Cytoplasm</keyword>
<keyword id="KW-0648">Protein biosynthesis</keyword>
<protein>
    <recommendedName>
        <fullName evidence="1">Ribosome-recycling factor</fullName>
        <shortName evidence="1">RRF</shortName>
    </recommendedName>
    <alternativeName>
        <fullName evidence="1">Ribosome-releasing factor</fullName>
    </alternativeName>
</protein>
<organism>
    <name type="scientific">Mannheimia succiniciproducens (strain KCTC 0769BP / MBEL55E)</name>
    <dbReference type="NCBI Taxonomy" id="221988"/>
    <lineage>
        <taxon>Bacteria</taxon>
        <taxon>Pseudomonadati</taxon>
        <taxon>Pseudomonadota</taxon>
        <taxon>Gammaproteobacteria</taxon>
        <taxon>Pasteurellales</taxon>
        <taxon>Pasteurellaceae</taxon>
        <taxon>Basfia</taxon>
    </lineage>
</organism>
<dbReference type="EMBL" id="AE016827">
    <property type="protein sequence ID" value="AAU38536.1"/>
    <property type="molecule type" value="Genomic_DNA"/>
</dbReference>
<dbReference type="RefSeq" id="WP_011201089.1">
    <property type="nucleotide sequence ID" value="NC_006300.1"/>
</dbReference>
<dbReference type="SMR" id="Q65R74"/>
<dbReference type="STRING" id="221988.MS1929"/>
<dbReference type="KEGG" id="msu:MS1929"/>
<dbReference type="eggNOG" id="COG0233">
    <property type="taxonomic scope" value="Bacteria"/>
</dbReference>
<dbReference type="HOGENOM" id="CLU_073981_2_0_6"/>
<dbReference type="OrthoDB" id="9804006at2"/>
<dbReference type="Proteomes" id="UP000000607">
    <property type="component" value="Chromosome"/>
</dbReference>
<dbReference type="GO" id="GO:0005829">
    <property type="term" value="C:cytosol"/>
    <property type="evidence" value="ECO:0007669"/>
    <property type="project" value="GOC"/>
</dbReference>
<dbReference type="GO" id="GO:0043023">
    <property type="term" value="F:ribosomal large subunit binding"/>
    <property type="evidence" value="ECO:0007669"/>
    <property type="project" value="TreeGrafter"/>
</dbReference>
<dbReference type="GO" id="GO:0002184">
    <property type="term" value="P:cytoplasmic translational termination"/>
    <property type="evidence" value="ECO:0007669"/>
    <property type="project" value="TreeGrafter"/>
</dbReference>
<dbReference type="CDD" id="cd00520">
    <property type="entry name" value="RRF"/>
    <property type="match status" value="1"/>
</dbReference>
<dbReference type="FunFam" id="1.10.132.20:FF:000001">
    <property type="entry name" value="Ribosome-recycling factor"/>
    <property type="match status" value="1"/>
</dbReference>
<dbReference type="FunFam" id="3.30.1360.40:FF:000001">
    <property type="entry name" value="Ribosome-recycling factor"/>
    <property type="match status" value="1"/>
</dbReference>
<dbReference type="Gene3D" id="3.30.1360.40">
    <property type="match status" value="1"/>
</dbReference>
<dbReference type="Gene3D" id="1.10.132.20">
    <property type="entry name" value="Ribosome-recycling factor"/>
    <property type="match status" value="1"/>
</dbReference>
<dbReference type="HAMAP" id="MF_00040">
    <property type="entry name" value="RRF"/>
    <property type="match status" value="1"/>
</dbReference>
<dbReference type="InterPro" id="IPR002661">
    <property type="entry name" value="Ribosome_recyc_fac"/>
</dbReference>
<dbReference type="InterPro" id="IPR023584">
    <property type="entry name" value="Ribosome_recyc_fac_dom"/>
</dbReference>
<dbReference type="InterPro" id="IPR036191">
    <property type="entry name" value="RRF_sf"/>
</dbReference>
<dbReference type="NCBIfam" id="TIGR00496">
    <property type="entry name" value="frr"/>
    <property type="match status" value="1"/>
</dbReference>
<dbReference type="PANTHER" id="PTHR20982:SF3">
    <property type="entry name" value="MITOCHONDRIAL RIBOSOME RECYCLING FACTOR PSEUDO 1"/>
    <property type="match status" value="1"/>
</dbReference>
<dbReference type="PANTHER" id="PTHR20982">
    <property type="entry name" value="RIBOSOME RECYCLING FACTOR"/>
    <property type="match status" value="1"/>
</dbReference>
<dbReference type="Pfam" id="PF01765">
    <property type="entry name" value="RRF"/>
    <property type="match status" value="1"/>
</dbReference>
<dbReference type="SUPFAM" id="SSF55194">
    <property type="entry name" value="Ribosome recycling factor, RRF"/>
    <property type="match status" value="1"/>
</dbReference>
<comment type="function">
    <text evidence="1">Responsible for the release of ribosomes from messenger RNA at the termination of protein biosynthesis. May increase the efficiency of translation by recycling ribosomes from one round of translation to another.</text>
</comment>
<comment type="subcellular location">
    <subcellularLocation>
        <location evidence="1">Cytoplasm</location>
    </subcellularLocation>
</comment>
<comment type="similarity">
    <text evidence="1">Belongs to the RRF family.</text>
</comment>
<name>RRF_MANSM</name>
<evidence type="ECO:0000255" key="1">
    <source>
        <dbReference type="HAMAP-Rule" id="MF_00040"/>
    </source>
</evidence>
<feature type="chain" id="PRO_0000167487" description="Ribosome-recycling factor">
    <location>
        <begin position="1"/>
        <end position="185"/>
    </location>
</feature>
<accession>Q65R74</accession>
<gene>
    <name evidence="1" type="primary">frr</name>
    <name type="ordered locus">MS1929</name>
</gene>
<reference key="1">
    <citation type="journal article" date="2004" name="Nat. Biotechnol.">
        <title>The genome sequence of the capnophilic rumen bacterium Mannheimia succiniciproducens.</title>
        <authorList>
            <person name="Hong S.H."/>
            <person name="Kim J.S."/>
            <person name="Lee S.Y."/>
            <person name="In Y.H."/>
            <person name="Choi S.S."/>
            <person name="Rih J.-K."/>
            <person name="Kim C.H."/>
            <person name="Jeong H."/>
            <person name="Hur C.G."/>
            <person name="Kim J.J."/>
        </authorList>
    </citation>
    <scope>NUCLEOTIDE SEQUENCE [LARGE SCALE GENOMIC DNA]</scope>
    <source>
        <strain>KCTC 0769BP / MBEL55E</strain>
    </source>
</reference>